<organism>
    <name type="scientific">Rippkaea orientalis (strain PCC 8801 / RF-1)</name>
    <name type="common">Cyanothece sp. (strain PCC 8801)</name>
    <dbReference type="NCBI Taxonomy" id="41431"/>
    <lineage>
        <taxon>Bacteria</taxon>
        <taxon>Bacillati</taxon>
        <taxon>Cyanobacteriota</taxon>
        <taxon>Cyanophyceae</taxon>
        <taxon>Oscillatoriophycideae</taxon>
        <taxon>Chroococcales</taxon>
        <taxon>Aphanothecaceae</taxon>
        <taxon>Rippkaea</taxon>
        <taxon>Rippkaea orientalis</taxon>
    </lineage>
</organism>
<name>TSAD_RIPO1</name>
<evidence type="ECO:0000255" key="1">
    <source>
        <dbReference type="HAMAP-Rule" id="MF_01445"/>
    </source>
</evidence>
<accession>B7K087</accession>
<comment type="function">
    <text evidence="1">Required for the formation of a threonylcarbamoyl group on adenosine at position 37 (t(6)A37) in tRNAs that read codons beginning with adenine. Is involved in the transfer of the threonylcarbamoyl moiety of threonylcarbamoyl-AMP (TC-AMP) to the N6 group of A37, together with TsaE and TsaB. TsaD likely plays a direct catalytic role in this reaction.</text>
</comment>
<comment type="catalytic activity">
    <reaction evidence="1">
        <text>L-threonylcarbamoyladenylate + adenosine(37) in tRNA = N(6)-L-threonylcarbamoyladenosine(37) in tRNA + AMP + H(+)</text>
        <dbReference type="Rhea" id="RHEA:37059"/>
        <dbReference type="Rhea" id="RHEA-COMP:10162"/>
        <dbReference type="Rhea" id="RHEA-COMP:10163"/>
        <dbReference type="ChEBI" id="CHEBI:15378"/>
        <dbReference type="ChEBI" id="CHEBI:73682"/>
        <dbReference type="ChEBI" id="CHEBI:74411"/>
        <dbReference type="ChEBI" id="CHEBI:74418"/>
        <dbReference type="ChEBI" id="CHEBI:456215"/>
        <dbReference type="EC" id="2.3.1.234"/>
    </reaction>
</comment>
<comment type="cofactor">
    <cofactor evidence="1">
        <name>Fe(2+)</name>
        <dbReference type="ChEBI" id="CHEBI:29033"/>
    </cofactor>
    <text evidence="1">Binds 1 Fe(2+) ion per subunit.</text>
</comment>
<comment type="subcellular location">
    <subcellularLocation>
        <location evidence="1">Cytoplasm</location>
    </subcellularLocation>
</comment>
<comment type="similarity">
    <text evidence="1">Belongs to the KAE1 / TsaD family.</text>
</comment>
<proteinExistence type="inferred from homology"/>
<dbReference type="EC" id="2.3.1.234" evidence="1"/>
<dbReference type="EMBL" id="CP001287">
    <property type="protein sequence ID" value="ACK67371.1"/>
    <property type="molecule type" value="Genomic_DNA"/>
</dbReference>
<dbReference type="RefSeq" id="WP_012596631.1">
    <property type="nucleotide sequence ID" value="NC_011726.1"/>
</dbReference>
<dbReference type="SMR" id="B7K087"/>
<dbReference type="STRING" id="41431.PCC8801_3403"/>
<dbReference type="KEGG" id="cyp:PCC8801_3403"/>
<dbReference type="eggNOG" id="COG0533">
    <property type="taxonomic scope" value="Bacteria"/>
</dbReference>
<dbReference type="HOGENOM" id="CLU_023208_0_2_3"/>
<dbReference type="OrthoDB" id="9806197at2"/>
<dbReference type="Proteomes" id="UP000008204">
    <property type="component" value="Chromosome"/>
</dbReference>
<dbReference type="GO" id="GO:0005737">
    <property type="term" value="C:cytoplasm"/>
    <property type="evidence" value="ECO:0007669"/>
    <property type="project" value="UniProtKB-SubCell"/>
</dbReference>
<dbReference type="GO" id="GO:0005506">
    <property type="term" value="F:iron ion binding"/>
    <property type="evidence" value="ECO:0007669"/>
    <property type="project" value="UniProtKB-UniRule"/>
</dbReference>
<dbReference type="GO" id="GO:0061711">
    <property type="term" value="F:N(6)-L-threonylcarbamoyladenine synthase activity"/>
    <property type="evidence" value="ECO:0007669"/>
    <property type="project" value="UniProtKB-EC"/>
</dbReference>
<dbReference type="GO" id="GO:0002949">
    <property type="term" value="P:tRNA threonylcarbamoyladenosine modification"/>
    <property type="evidence" value="ECO:0007669"/>
    <property type="project" value="UniProtKB-UniRule"/>
</dbReference>
<dbReference type="CDD" id="cd24133">
    <property type="entry name" value="ASKHA_NBD_TsaD_bac"/>
    <property type="match status" value="1"/>
</dbReference>
<dbReference type="FunFam" id="3.30.420.40:FF:000012">
    <property type="entry name" value="tRNA N6-adenosine threonylcarbamoyltransferase"/>
    <property type="match status" value="1"/>
</dbReference>
<dbReference type="FunFam" id="3.30.420.40:FF:000040">
    <property type="entry name" value="tRNA N6-adenosine threonylcarbamoyltransferase"/>
    <property type="match status" value="1"/>
</dbReference>
<dbReference type="Gene3D" id="3.30.420.40">
    <property type="match status" value="2"/>
</dbReference>
<dbReference type="HAMAP" id="MF_01445">
    <property type="entry name" value="TsaD"/>
    <property type="match status" value="1"/>
</dbReference>
<dbReference type="InterPro" id="IPR043129">
    <property type="entry name" value="ATPase_NBD"/>
</dbReference>
<dbReference type="InterPro" id="IPR000905">
    <property type="entry name" value="Gcp-like_dom"/>
</dbReference>
<dbReference type="InterPro" id="IPR017861">
    <property type="entry name" value="KAE1/TsaD"/>
</dbReference>
<dbReference type="InterPro" id="IPR017860">
    <property type="entry name" value="Peptidase_M22_CS"/>
</dbReference>
<dbReference type="InterPro" id="IPR022450">
    <property type="entry name" value="TsaD"/>
</dbReference>
<dbReference type="NCBIfam" id="TIGR00329">
    <property type="entry name" value="gcp_kae1"/>
    <property type="match status" value="1"/>
</dbReference>
<dbReference type="NCBIfam" id="TIGR03723">
    <property type="entry name" value="T6A_TsaD_YgjD"/>
    <property type="match status" value="1"/>
</dbReference>
<dbReference type="PANTHER" id="PTHR11735">
    <property type="entry name" value="TRNA N6-ADENOSINE THREONYLCARBAMOYLTRANSFERASE"/>
    <property type="match status" value="1"/>
</dbReference>
<dbReference type="PANTHER" id="PTHR11735:SF6">
    <property type="entry name" value="TRNA N6-ADENOSINE THREONYLCARBAMOYLTRANSFERASE, MITOCHONDRIAL"/>
    <property type="match status" value="1"/>
</dbReference>
<dbReference type="Pfam" id="PF00814">
    <property type="entry name" value="TsaD"/>
    <property type="match status" value="1"/>
</dbReference>
<dbReference type="PRINTS" id="PR00789">
    <property type="entry name" value="OSIALOPTASE"/>
</dbReference>
<dbReference type="SUPFAM" id="SSF53067">
    <property type="entry name" value="Actin-like ATPase domain"/>
    <property type="match status" value="2"/>
</dbReference>
<dbReference type="PROSITE" id="PS01016">
    <property type="entry name" value="GLYCOPROTEASE"/>
    <property type="match status" value="1"/>
</dbReference>
<sequence>MATVLAIETSCDETAVAIVNNRNVCSSVVASQIALHKTYGGVVPEMASREHLITINACLEEALAQSNLSWSDIDGVAATMAPGLVGALMVGATTAKTLAIVHQKPFVGVHHLEGHIYATYLSDPTWEPPFLCLLVSGGHTSLIWVKDCGFYEQLGATRDDAAGEAFDKVARLLNLGYPGGPVIDRLAKTGNPQAFALPEGRVSLPEGGYHPYDSSFSGLKTAVLRLVQTLEKDDKNSLPVADLAASFQSTVARSLTKKSIACALDYGINSIAVGGGVAANSELRKQLQEAGINHNIKVHFPPLKWCTDNAAMIGCAAADHLNRGHTSSLSLNVNSRLSITDVMQLYEF</sequence>
<feature type="chain" id="PRO_1000145971" description="tRNA N6-adenosine threonylcarbamoyltransferase">
    <location>
        <begin position="1"/>
        <end position="348"/>
    </location>
</feature>
<feature type="binding site" evidence="1">
    <location>
        <position position="111"/>
    </location>
    <ligand>
        <name>Fe cation</name>
        <dbReference type="ChEBI" id="CHEBI:24875"/>
    </ligand>
</feature>
<feature type="binding site" evidence="1">
    <location>
        <position position="115"/>
    </location>
    <ligand>
        <name>Fe cation</name>
        <dbReference type="ChEBI" id="CHEBI:24875"/>
    </ligand>
</feature>
<feature type="binding site" evidence="1">
    <location>
        <begin position="134"/>
        <end position="138"/>
    </location>
    <ligand>
        <name>substrate</name>
    </ligand>
</feature>
<feature type="binding site" evidence="1">
    <location>
        <position position="167"/>
    </location>
    <ligand>
        <name>substrate</name>
    </ligand>
</feature>
<feature type="binding site" evidence="1">
    <location>
        <position position="180"/>
    </location>
    <ligand>
        <name>substrate</name>
    </ligand>
</feature>
<feature type="binding site" evidence="1">
    <location>
        <position position="184"/>
    </location>
    <ligand>
        <name>substrate</name>
    </ligand>
</feature>
<feature type="binding site" evidence="1">
    <location>
        <position position="280"/>
    </location>
    <ligand>
        <name>substrate</name>
    </ligand>
</feature>
<feature type="binding site" evidence="1">
    <location>
        <position position="308"/>
    </location>
    <ligand>
        <name>Fe cation</name>
        <dbReference type="ChEBI" id="CHEBI:24875"/>
    </ligand>
</feature>
<keyword id="KW-0012">Acyltransferase</keyword>
<keyword id="KW-0963">Cytoplasm</keyword>
<keyword id="KW-0408">Iron</keyword>
<keyword id="KW-0479">Metal-binding</keyword>
<keyword id="KW-1185">Reference proteome</keyword>
<keyword id="KW-0808">Transferase</keyword>
<keyword id="KW-0819">tRNA processing</keyword>
<protein>
    <recommendedName>
        <fullName evidence="1">tRNA N6-adenosine threonylcarbamoyltransferase</fullName>
        <ecNumber evidence="1">2.3.1.234</ecNumber>
    </recommendedName>
    <alternativeName>
        <fullName evidence="1">N6-L-threonylcarbamoyladenine synthase</fullName>
        <shortName evidence="1">t(6)A synthase</shortName>
    </alternativeName>
    <alternativeName>
        <fullName evidence="1">t(6)A37 threonylcarbamoyladenosine biosynthesis protein TsaD</fullName>
    </alternativeName>
    <alternativeName>
        <fullName evidence="1">tRNA threonylcarbamoyladenosine biosynthesis protein TsaD</fullName>
    </alternativeName>
</protein>
<reference key="1">
    <citation type="journal article" date="2011" name="MBio">
        <title>Novel metabolic attributes of the genus Cyanothece, comprising a group of unicellular nitrogen-fixing Cyanobacteria.</title>
        <authorList>
            <person name="Bandyopadhyay A."/>
            <person name="Elvitigala T."/>
            <person name="Welsh E."/>
            <person name="Stockel J."/>
            <person name="Liberton M."/>
            <person name="Min H."/>
            <person name="Sherman L.A."/>
            <person name="Pakrasi H.B."/>
        </authorList>
    </citation>
    <scope>NUCLEOTIDE SEQUENCE [LARGE SCALE GENOMIC DNA]</scope>
    <source>
        <strain>PCC 8801 / RF-1</strain>
    </source>
</reference>
<gene>
    <name evidence="1" type="primary">tsaD</name>
    <name type="synonym">gcp</name>
    <name type="ordered locus">PCC8801_3403</name>
</gene>